<dbReference type="EMBL" id="CP000447">
    <property type="protein sequence ID" value="ABI70033.1"/>
    <property type="molecule type" value="Genomic_DNA"/>
</dbReference>
<dbReference type="RefSeq" id="WP_011635660.1">
    <property type="nucleotide sequence ID" value="NC_008345.1"/>
</dbReference>
<dbReference type="SMR" id="Q089N2"/>
<dbReference type="STRING" id="318167.Sfri_0170"/>
<dbReference type="GeneID" id="90572185"/>
<dbReference type="KEGG" id="sfr:Sfri_0170"/>
<dbReference type="eggNOG" id="COG0099">
    <property type="taxonomic scope" value="Bacteria"/>
</dbReference>
<dbReference type="HOGENOM" id="CLU_103849_1_2_6"/>
<dbReference type="OrthoDB" id="9803610at2"/>
<dbReference type="Proteomes" id="UP000000684">
    <property type="component" value="Chromosome"/>
</dbReference>
<dbReference type="GO" id="GO:0005829">
    <property type="term" value="C:cytosol"/>
    <property type="evidence" value="ECO:0007669"/>
    <property type="project" value="TreeGrafter"/>
</dbReference>
<dbReference type="GO" id="GO:0015935">
    <property type="term" value="C:small ribosomal subunit"/>
    <property type="evidence" value="ECO:0007669"/>
    <property type="project" value="TreeGrafter"/>
</dbReference>
<dbReference type="GO" id="GO:0019843">
    <property type="term" value="F:rRNA binding"/>
    <property type="evidence" value="ECO:0007669"/>
    <property type="project" value="UniProtKB-UniRule"/>
</dbReference>
<dbReference type="GO" id="GO:0003735">
    <property type="term" value="F:structural constituent of ribosome"/>
    <property type="evidence" value="ECO:0007669"/>
    <property type="project" value="InterPro"/>
</dbReference>
<dbReference type="GO" id="GO:0000049">
    <property type="term" value="F:tRNA binding"/>
    <property type="evidence" value="ECO:0007669"/>
    <property type="project" value="UniProtKB-UniRule"/>
</dbReference>
<dbReference type="GO" id="GO:0006412">
    <property type="term" value="P:translation"/>
    <property type="evidence" value="ECO:0007669"/>
    <property type="project" value="UniProtKB-UniRule"/>
</dbReference>
<dbReference type="FunFam" id="1.10.8.50:FF:000001">
    <property type="entry name" value="30S ribosomal protein S13"/>
    <property type="match status" value="1"/>
</dbReference>
<dbReference type="FunFam" id="4.10.910.10:FF:000001">
    <property type="entry name" value="30S ribosomal protein S13"/>
    <property type="match status" value="1"/>
</dbReference>
<dbReference type="Gene3D" id="1.10.8.50">
    <property type="match status" value="1"/>
</dbReference>
<dbReference type="Gene3D" id="4.10.910.10">
    <property type="entry name" value="30s ribosomal protein s13, domain 2"/>
    <property type="match status" value="1"/>
</dbReference>
<dbReference type="HAMAP" id="MF_01315">
    <property type="entry name" value="Ribosomal_uS13"/>
    <property type="match status" value="1"/>
</dbReference>
<dbReference type="InterPro" id="IPR027437">
    <property type="entry name" value="Rbsml_uS13_C"/>
</dbReference>
<dbReference type="InterPro" id="IPR001892">
    <property type="entry name" value="Ribosomal_uS13"/>
</dbReference>
<dbReference type="InterPro" id="IPR010979">
    <property type="entry name" value="Ribosomal_uS13-like_H2TH"/>
</dbReference>
<dbReference type="InterPro" id="IPR019980">
    <property type="entry name" value="Ribosomal_uS13_bac-type"/>
</dbReference>
<dbReference type="InterPro" id="IPR018269">
    <property type="entry name" value="Ribosomal_uS13_CS"/>
</dbReference>
<dbReference type="NCBIfam" id="TIGR03631">
    <property type="entry name" value="uS13_bact"/>
    <property type="match status" value="1"/>
</dbReference>
<dbReference type="PANTHER" id="PTHR10871">
    <property type="entry name" value="30S RIBOSOMAL PROTEIN S13/40S RIBOSOMAL PROTEIN S18"/>
    <property type="match status" value="1"/>
</dbReference>
<dbReference type="PANTHER" id="PTHR10871:SF1">
    <property type="entry name" value="SMALL RIBOSOMAL SUBUNIT PROTEIN US13M"/>
    <property type="match status" value="1"/>
</dbReference>
<dbReference type="Pfam" id="PF00416">
    <property type="entry name" value="Ribosomal_S13"/>
    <property type="match status" value="1"/>
</dbReference>
<dbReference type="PIRSF" id="PIRSF002134">
    <property type="entry name" value="Ribosomal_S13"/>
    <property type="match status" value="1"/>
</dbReference>
<dbReference type="SUPFAM" id="SSF46946">
    <property type="entry name" value="S13-like H2TH domain"/>
    <property type="match status" value="1"/>
</dbReference>
<dbReference type="PROSITE" id="PS00646">
    <property type="entry name" value="RIBOSOMAL_S13_1"/>
    <property type="match status" value="1"/>
</dbReference>
<dbReference type="PROSITE" id="PS50159">
    <property type="entry name" value="RIBOSOMAL_S13_2"/>
    <property type="match status" value="1"/>
</dbReference>
<keyword id="KW-1185">Reference proteome</keyword>
<keyword id="KW-0687">Ribonucleoprotein</keyword>
<keyword id="KW-0689">Ribosomal protein</keyword>
<keyword id="KW-0694">RNA-binding</keyword>
<keyword id="KW-0699">rRNA-binding</keyword>
<keyword id="KW-0820">tRNA-binding</keyword>
<proteinExistence type="inferred from homology"/>
<organism>
    <name type="scientific">Shewanella frigidimarina (strain NCIMB 400)</name>
    <dbReference type="NCBI Taxonomy" id="318167"/>
    <lineage>
        <taxon>Bacteria</taxon>
        <taxon>Pseudomonadati</taxon>
        <taxon>Pseudomonadota</taxon>
        <taxon>Gammaproteobacteria</taxon>
        <taxon>Alteromonadales</taxon>
        <taxon>Shewanellaceae</taxon>
        <taxon>Shewanella</taxon>
    </lineage>
</organism>
<protein>
    <recommendedName>
        <fullName evidence="1">Small ribosomal subunit protein uS13</fullName>
    </recommendedName>
    <alternativeName>
        <fullName evidence="3">30S ribosomal protein S13</fullName>
    </alternativeName>
</protein>
<feature type="chain" id="PRO_0000306704" description="Small ribosomal subunit protein uS13">
    <location>
        <begin position="1"/>
        <end position="118"/>
    </location>
</feature>
<feature type="region of interest" description="Disordered" evidence="2">
    <location>
        <begin position="94"/>
        <end position="118"/>
    </location>
</feature>
<evidence type="ECO:0000255" key="1">
    <source>
        <dbReference type="HAMAP-Rule" id="MF_01315"/>
    </source>
</evidence>
<evidence type="ECO:0000256" key="2">
    <source>
        <dbReference type="SAM" id="MobiDB-lite"/>
    </source>
</evidence>
<evidence type="ECO:0000305" key="3"/>
<gene>
    <name evidence="1" type="primary">rpsM</name>
    <name type="ordered locus">Sfri_0170</name>
</gene>
<accession>Q089N2</accession>
<name>RS13_SHEFN</name>
<comment type="function">
    <text evidence="1">Located at the top of the head of the 30S subunit, it contacts several helices of the 16S rRNA. In the 70S ribosome it contacts the 23S rRNA (bridge B1a) and protein L5 of the 50S subunit (bridge B1b), connecting the 2 subunits; these bridges are implicated in subunit movement. Contacts the tRNAs in the A and P-sites.</text>
</comment>
<comment type="subunit">
    <text evidence="1">Part of the 30S ribosomal subunit. Forms a loose heterodimer with protein S19. Forms two bridges to the 50S subunit in the 70S ribosome.</text>
</comment>
<comment type="similarity">
    <text evidence="1">Belongs to the universal ribosomal protein uS13 family.</text>
</comment>
<sequence length="118" mass="13379">MARIAGINIPDQKHTVIALTAIFGIGRTRARAICASTSIAEDAKIKELSEAQIDILREEVAKYTVEGDLRREISMNIKRLMDLGCYRGLRHRRSLPLRGQRTKTNARTRKGPRKPIRK</sequence>
<reference key="1">
    <citation type="submission" date="2006-08" db="EMBL/GenBank/DDBJ databases">
        <title>Complete sequence of Shewanella frigidimarina NCIMB 400.</title>
        <authorList>
            <consortium name="US DOE Joint Genome Institute"/>
            <person name="Copeland A."/>
            <person name="Lucas S."/>
            <person name="Lapidus A."/>
            <person name="Barry K."/>
            <person name="Detter J.C."/>
            <person name="Glavina del Rio T."/>
            <person name="Hammon N."/>
            <person name="Israni S."/>
            <person name="Dalin E."/>
            <person name="Tice H."/>
            <person name="Pitluck S."/>
            <person name="Fredrickson J.K."/>
            <person name="Kolker E."/>
            <person name="McCuel L.A."/>
            <person name="DiChristina T."/>
            <person name="Nealson K.H."/>
            <person name="Newman D."/>
            <person name="Tiedje J.M."/>
            <person name="Zhou J."/>
            <person name="Romine M.F."/>
            <person name="Culley D.E."/>
            <person name="Serres M."/>
            <person name="Chertkov O."/>
            <person name="Brettin T."/>
            <person name="Bruce D."/>
            <person name="Han C."/>
            <person name="Tapia R."/>
            <person name="Gilna P."/>
            <person name="Schmutz J."/>
            <person name="Larimer F."/>
            <person name="Land M."/>
            <person name="Hauser L."/>
            <person name="Kyrpides N."/>
            <person name="Mikhailova N."/>
            <person name="Richardson P."/>
        </authorList>
    </citation>
    <scope>NUCLEOTIDE SEQUENCE [LARGE SCALE GENOMIC DNA]</scope>
    <source>
        <strain>NCIMB 400</strain>
    </source>
</reference>